<organism>
    <name type="scientific">Arabidopsis thaliana</name>
    <name type="common">Mouse-ear cress</name>
    <dbReference type="NCBI Taxonomy" id="3702"/>
    <lineage>
        <taxon>Eukaryota</taxon>
        <taxon>Viridiplantae</taxon>
        <taxon>Streptophyta</taxon>
        <taxon>Embryophyta</taxon>
        <taxon>Tracheophyta</taxon>
        <taxon>Spermatophyta</taxon>
        <taxon>Magnoliopsida</taxon>
        <taxon>eudicotyledons</taxon>
        <taxon>Gunneridae</taxon>
        <taxon>Pentapetalae</taxon>
        <taxon>rosids</taxon>
        <taxon>malvids</taxon>
        <taxon>Brassicales</taxon>
        <taxon>Brassicaceae</taxon>
        <taxon>Camelineae</taxon>
        <taxon>Arabidopsis</taxon>
    </lineage>
</organism>
<feature type="chain" id="PRO_0000352259" description="PRA1 family protein F1">
    <location>
        <begin position="1"/>
        <end position="180"/>
    </location>
</feature>
<feature type="transmembrane region" description="Helical" evidence="2">
    <location>
        <begin position="63"/>
        <end position="83"/>
    </location>
</feature>
<feature type="transmembrane region" description="Helical" evidence="2">
    <location>
        <begin position="84"/>
        <end position="104"/>
    </location>
</feature>
<feature type="transmembrane region" description="Helical" evidence="2">
    <location>
        <begin position="123"/>
        <end position="143"/>
    </location>
</feature>
<feature type="transmembrane region" description="Helical" evidence="2">
    <location>
        <begin position="145"/>
        <end position="165"/>
    </location>
</feature>
<reference key="1">
    <citation type="journal article" date="2000" name="Nature">
        <title>Sequence and analysis of chromosome 1 of the plant Arabidopsis thaliana.</title>
        <authorList>
            <person name="Theologis A."/>
            <person name="Ecker J.R."/>
            <person name="Palm C.J."/>
            <person name="Federspiel N.A."/>
            <person name="Kaul S."/>
            <person name="White O."/>
            <person name="Alonso J."/>
            <person name="Altafi H."/>
            <person name="Araujo R."/>
            <person name="Bowman C.L."/>
            <person name="Brooks S.Y."/>
            <person name="Buehler E."/>
            <person name="Chan A."/>
            <person name="Chao Q."/>
            <person name="Chen H."/>
            <person name="Cheuk R.F."/>
            <person name="Chin C.W."/>
            <person name="Chung M.K."/>
            <person name="Conn L."/>
            <person name="Conway A.B."/>
            <person name="Conway A.R."/>
            <person name="Creasy T.H."/>
            <person name="Dewar K."/>
            <person name="Dunn P."/>
            <person name="Etgu P."/>
            <person name="Feldblyum T.V."/>
            <person name="Feng J.-D."/>
            <person name="Fong B."/>
            <person name="Fujii C.Y."/>
            <person name="Gill J.E."/>
            <person name="Goldsmith A.D."/>
            <person name="Haas B."/>
            <person name="Hansen N.F."/>
            <person name="Hughes B."/>
            <person name="Huizar L."/>
            <person name="Hunter J.L."/>
            <person name="Jenkins J."/>
            <person name="Johnson-Hopson C."/>
            <person name="Khan S."/>
            <person name="Khaykin E."/>
            <person name="Kim C.J."/>
            <person name="Koo H.L."/>
            <person name="Kremenetskaia I."/>
            <person name="Kurtz D.B."/>
            <person name="Kwan A."/>
            <person name="Lam B."/>
            <person name="Langin-Hooper S."/>
            <person name="Lee A."/>
            <person name="Lee J.M."/>
            <person name="Lenz C.A."/>
            <person name="Li J.H."/>
            <person name="Li Y.-P."/>
            <person name="Lin X."/>
            <person name="Liu S.X."/>
            <person name="Liu Z.A."/>
            <person name="Luros J.S."/>
            <person name="Maiti R."/>
            <person name="Marziali A."/>
            <person name="Militscher J."/>
            <person name="Miranda M."/>
            <person name="Nguyen M."/>
            <person name="Nierman W.C."/>
            <person name="Osborne B.I."/>
            <person name="Pai G."/>
            <person name="Peterson J."/>
            <person name="Pham P.K."/>
            <person name="Rizzo M."/>
            <person name="Rooney T."/>
            <person name="Rowley D."/>
            <person name="Sakano H."/>
            <person name="Salzberg S.L."/>
            <person name="Schwartz J.R."/>
            <person name="Shinn P."/>
            <person name="Southwick A.M."/>
            <person name="Sun H."/>
            <person name="Tallon L.J."/>
            <person name="Tambunga G."/>
            <person name="Toriumi M.J."/>
            <person name="Town C.D."/>
            <person name="Utterback T."/>
            <person name="Van Aken S."/>
            <person name="Vaysberg M."/>
            <person name="Vysotskaia V.S."/>
            <person name="Walker M."/>
            <person name="Wu D."/>
            <person name="Yu G."/>
            <person name="Fraser C.M."/>
            <person name="Venter J.C."/>
            <person name="Davis R.W."/>
        </authorList>
    </citation>
    <scope>NUCLEOTIDE SEQUENCE [LARGE SCALE GENOMIC DNA]</scope>
    <source>
        <strain>cv. Columbia</strain>
    </source>
</reference>
<reference key="2">
    <citation type="journal article" date="2017" name="Plant J.">
        <title>Araport11: a complete reannotation of the Arabidopsis thaliana reference genome.</title>
        <authorList>
            <person name="Cheng C.Y."/>
            <person name="Krishnakumar V."/>
            <person name="Chan A.P."/>
            <person name="Thibaud-Nissen F."/>
            <person name="Schobel S."/>
            <person name="Town C.D."/>
        </authorList>
    </citation>
    <scope>GENOME REANNOTATION</scope>
    <source>
        <strain>cv. Columbia</strain>
    </source>
</reference>
<reference key="3">
    <citation type="submission" date="2004-06" db="EMBL/GenBank/DDBJ databases">
        <title>Arabidopsis ORF clones.</title>
        <authorList>
            <person name="Cheuk R.F."/>
            <person name="Chen H."/>
            <person name="Kim C.J."/>
            <person name="Shinn P."/>
            <person name="Ecker J.R."/>
        </authorList>
    </citation>
    <scope>NUCLEOTIDE SEQUENCE [LARGE SCALE MRNA]</scope>
    <source>
        <strain>cv. Columbia</strain>
    </source>
</reference>
<reference key="4">
    <citation type="journal article" date="2008" name="Plant Physiol.">
        <title>The PRA1 gene family in Arabidopsis.</title>
        <authorList>
            <person name="Alvim Kamei C.L."/>
            <person name="Boruc J."/>
            <person name="Vandepoele K."/>
            <person name="Van den Daele H."/>
            <person name="Maes S."/>
            <person name="Russinova E."/>
            <person name="Inze D."/>
            <person name="de Veylder L."/>
        </authorList>
    </citation>
    <scope>SUBCELLULAR LOCATION</scope>
    <scope>TISSUE SPECIFICITY</scope>
    <scope>INTERACTION WITH PRA1F2</scope>
    <scope>GENE FAMILY</scope>
    <scope>NOMENCLATURE</scope>
</reference>
<protein>
    <recommendedName>
        <fullName>PRA1 family protein F1</fullName>
        <shortName>AtPRA1.F1</shortName>
    </recommendedName>
</protein>
<comment type="function">
    <text evidence="1">May be involved in both secretory and endocytic intracellular trafficking in the endosomal/prevacuolar compartments.</text>
</comment>
<comment type="subunit">
    <text evidence="3">Interacts with PRA1F2.</text>
</comment>
<comment type="subcellular location">
    <subcellularLocation>
        <location evidence="3">Endosome membrane</location>
        <topology evidence="3">Multi-pass membrane protein</topology>
    </subcellularLocation>
</comment>
<comment type="tissue specificity">
    <text evidence="3">Expressed in hypocotyls, leaf bases and shoot apex.</text>
</comment>
<comment type="similarity">
    <text evidence="4">Belongs to the PRA1 family.</text>
</comment>
<name>PR1F1_ARATH</name>
<gene>
    <name type="primary">PRA1F1</name>
    <name type="ordered locus">At1g17700</name>
    <name type="ORF">F11A6.4</name>
</gene>
<evidence type="ECO:0000250" key="1"/>
<evidence type="ECO:0000255" key="2"/>
<evidence type="ECO:0000269" key="3">
    <source>
    </source>
</evidence>
<evidence type="ECO:0000305" key="4"/>
<keyword id="KW-0967">Endosome</keyword>
<keyword id="KW-0472">Membrane</keyword>
<keyword id="KW-1185">Reference proteome</keyword>
<keyword id="KW-0812">Transmembrane</keyword>
<keyword id="KW-1133">Transmembrane helix</keyword>
<keyword id="KW-0813">Transport</keyword>
<accession>Q9FZ63</accession>
<proteinExistence type="evidence at protein level"/>
<dbReference type="EMBL" id="AC034257">
    <property type="protein sequence ID" value="AAF99811.1"/>
    <property type="molecule type" value="Genomic_DNA"/>
</dbReference>
<dbReference type="EMBL" id="CP002684">
    <property type="protein sequence ID" value="AEE29623.1"/>
    <property type="molecule type" value="Genomic_DNA"/>
</dbReference>
<dbReference type="EMBL" id="BT012593">
    <property type="protein sequence ID" value="AAT06412.1"/>
    <property type="molecule type" value="mRNA"/>
</dbReference>
<dbReference type="EMBL" id="BT014815">
    <property type="protein sequence ID" value="AAT41798.1"/>
    <property type="molecule type" value="mRNA"/>
</dbReference>
<dbReference type="PIR" id="H86311">
    <property type="entry name" value="H86311"/>
</dbReference>
<dbReference type="RefSeq" id="NP_173212.1">
    <property type="nucleotide sequence ID" value="NM_101632.4"/>
</dbReference>
<dbReference type="FunCoup" id="Q9FZ63">
    <property type="interactions" value="1369"/>
</dbReference>
<dbReference type="IntAct" id="Q9FZ63">
    <property type="interactions" value="1"/>
</dbReference>
<dbReference type="STRING" id="3702.Q9FZ63"/>
<dbReference type="iPTMnet" id="Q9FZ63"/>
<dbReference type="PaxDb" id="3702-AT1G17700.1"/>
<dbReference type="ProteomicsDB" id="226413"/>
<dbReference type="EnsemblPlants" id="AT1G17700.1">
    <property type="protein sequence ID" value="AT1G17700.1"/>
    <property type="gene ID" value="AT1G17700"/>
</dbReference>
<dbReference type="GeneID" id="838346"/>
<dbReference type="Gramene" id="AT1G17700.1">
    <property type="protein sequence ID" value="AT1G17700.1"/>
    <property type="gene ID" value="AT1G17700"/>
</dbReference>
<dbReference type="KEGG" id="ath:AT1G17700"/>
<dbReference type="Araport" id="AT1G17700"/>
<dbReference type="TAIR" id="AT1G17700">
    <property type="gene designation" value="PRA1.F1"/>
</dbReference>
<dbReference type="eggNOG" id="KOG3142">
    <property type="taxonomic scope" value="Eukaryota"/>
</dbReference>
<dbReference type="HOGENOM" id="CLU_060198_2_1_1"/>
<dbReference type="InParanoid" id="Q9FZ63"/>
<dbReference type="OMA" id="TRTNNQH"/>
<dbReference type="OrthoDB" id="63113at2759"/>
<dbReference type="PhylomeDB" id="Q9FZ63"/>
<dbReference type="PRO" id="PR:Q9FZ63"/>
<dbReference type="Proteomes" id="UP000006548">
    <property type="component" value="Chromosome 1"/>
</dbReference>
<dbReference type="ExpressionAtlas" id="Q9FZ63">
    <property type="expression patterns" value="baseline and differential"/>
</dbReference>
<dbReference type="GO" id="GO:0005783">
    <property type="term" value="C:endoplasmic reticulum"/>
    <property type="evidence" value="ECO:0000314"/>
    <property type="project" value="TAIR"/>
</dbReference>
<dbReference type="GO" id="GO:0010008">
    <property type="term" value="C:endosome membrane"/>
    <property type="evidence" value="ECO:0007669"/>
    <property type="project" value="UniProtKB-SubCell"/>
</dbReference>
<dbReference type="GO" id="GO:0016192">
    <property type="term" value="P:vesicle-mediated transport"/>
    <property type="evidence" value="ECO:0000314"/>
    <property type="project" value="TAIR"/>
</dbReference>
<dbReference type="InterPro" id="IPR004895">
    <property type="entry name" value="Prenylated_rab_accept_PRA1"/>
</dbReference>
<dbReference type="PANTHER" id="PTHR19317:SF90">
    <property type="entry name" value="PRA1 FAMILY PROTEIN F1"/>
    <property type="match status" value="1"/>
</dbReference>
<dbReference type="PANTHER" id="PTHR19317">
    <property type="entry name" value="PRENYLATED RAB ACCEPTOR 1-RELATED"/>
    <property type="match status" value="1"/>
</dbReference>
<dbReference type="Pfam" id="PF03208">
    <property type="entry name" value="PRA1"/>
    <property type="match status" value="1"/>
</dbReference>
<sequence length="180" mass="20445">MTTYGTNQKSSNDLAPKLEYITRGINQHKRSGLATRRPWKQMLDLGSFNFPRKLATVITRIRANTVYFQTNYTIVVLFSVFLSLIWNPFSLLVLLALLGAWLFLYFLRDEPLTVFDREIDHRIVLIIMSVITLSILFLTDAKLNIAVAIVAGALAVLSHAAVRKTEDLFQTDEETSLLNP</sequence>